<proteinExistence type="inferred from homology"/>
<dbReference type="EMBL" id="CP000538">
    <property type="protein sequence ID" value="EAQ72231.1"/>
    <property type="molecule type" value="Genomic_DNA"/>
</dbReference>
<dbReference type="RefSeq" id="WP_002852982.1">
    <property type="nucleotide sequence ID" value="NC_008787.1"/>
</dbReference>
<dbReference type="SMR" id="A1W062"/>
<dbReference type="KEGG" id="cjj:CJJ81176_1093"/>
<dbReference type="eggNOG" id="COG1699">
    <property type="taxonomic scope" value="Bacteria"/>
</dbReference>
<dbReference type="HOGENOM" id="CLU_112356_2_0_7"/>
<dbReference type="Proteomes" id="UP000000646">
    <property type="component" value="Chromosome"/>
</dbReference>
<dbReference type="GO" id="GO:0005737">
    <property type="term" value="C:cytoplasm"/>
    <property type="evidence" value="ECO:0007669"/>
    <property type="project" value="UniProtKB-SubCell"/>
</dbReference>
<dbReference type="GO" id="GO:0044780">
    <property type="term" value="P:bacterial-type flagellum assembly"/>
    <property type="evidence" value="ECO:0007669"/>
    <property type="project" value="UniProtKB-UniRule"/>
</dbReference>
<dbReference type="GO" id="GO:0006417">
    <property type="term" value="P:regulation of translation"/>
    <property type="evidence" value="ECO:0007669"/>
    <property type="project" value="UniProtKB-KW"/>
</dbReference>
<dbReference type="Gene3D" id="2.30.290.10">
    <property type="entry name" value="BH3618-like"/>
    <property type="match status" value="1"/>
</dbReference>
<dbReference type="HAMAP" id="MF_01185">
    <property type="entry name" value="FliW"/>
    <property type="match status" value="1"/>
</dbReference>
<dbReference type="InterPro" id="IPR003775">
    <property type="entry name" value="Flagellar_assembly_factor_FliW"/>
</dbReference>
<dbReference type="InterPro" id="IPR024046">
    <property type="entry name" value="Flagellar_assmbl_FliW_dom_sf"/>
</dbReference>
<dbReference type="NCBIfam" id="NF009790">
    <property type="entry name" value="PRK13282.1"/>
    <property type="match status" value="1"/>
</dbReference>
<dbReference type="PANTHER" id="PTHR39190">
    <property type="entry name" value="FLAGELLAR ASSEMBLY FACTOR FLIW"/>
    <property type="match status" value="1"/>
</dbReference>
<dbReference type="PANTHER" id="PTHR39190:SF1">
    <property type="entry name" value="FLAGELLAR ASSEMBLY FACTOR FLIW"/>
    <property type="match status" value="1"/>
</dbReference>
<dbReference type="Pfam" id="PF02623">
    <property type="entry name" value="FliW"/>
    <property type="match status" value="1"/>
</dbReference>
<dbReference type="SUPFAM" id="SSF141457">
    <property type="entry name" value="BH3618-like"/>
    <property type="match status" value="1"/>
</dbReference>
<comment type="function">
    <text evidence="1">Acts as an anti-CsrA protein, binds CsrA and prevents it from repressing translation of its target genes, one of which is flagellin. Binds to flagellin and participates in the assembly of the flagellum.</text>
</comment>
<comment type="subunit">
    <text evidence="1">Interacts with translational regulator CsrA and flagellin(s).</text>
</comment>
<comment type="subcellular location">
    <subcellularLocation>
        <location evidence="1">Cytoplasm</location>
    </subcellularLocation>
</comment>
<comment type="similarity">
    <text evidence="1">Belongs to the FliW family.</text>
</comment>
<reference key="1">
    <citation type="submission" date="2006-12" db="EMBL/GenBank/DDBJ databases">
        <authorList>
            <person name="Fouts D.E."/>
            <person name="Nelson K.E."/>
            <person name="Sebastian Y."/>
        </authorList>
    </citation>
    <scope>NUCLEOTIDE SEQUENCE [LARGE SCALE GENOMIC DNA]</scope>
    <source>
        <strain>81-176</strain>
    </source>
</reference>
<keyword id="KW-1005">Bacterial flagellum biogenesis</keyword>
<keyword id="KW-0143">Chaperone</keyword>
<keyword id="KW-0963">Cytoplasm</keyword>
<keyword id="KW-0810">Translation regulation</keyword>
<evidence type="ECO:0000255" key="1">
    <source>
        <dbReference type="HAMAP-Rule" id="MF_01185"/>
    </source>
</evidence>
<gene>
    <name evidence="1" type="primary">fliW</name>
    <name type="ordered locus">CJJ81176_1093</name>
</gene>
<organism>
    <name type="scientific">Campylobacter jejuni subsp. jejuni serotype O:23/36 (strain 81-176)</name>
    <dbReference type="NCBI Taxonomy" id="354242"/>
    <lineage>
        <taxon>Bacteria</taxon>
        <taxon>Pseudomonadati</taxon>
        <taxon>Campylobacterota</taxon>
        <taxon>Epsilonproteobacteria</taxon>
        <taxon>Campylobacterales</taxon>
        <taxon>Campylobacteraceae</taxon>
        <taxon>Campylobacter</taxon>
    </lineage>
</organism>
<accession>A1W062</accession>
<protein>
    <recommendedName>
        <fullName evidence="1">Flagellar assembly factor FliW</fullName>
    </recommendedName>
</protein>
<feature type="chain" id="PRO_1000065812" description="Flagellar assembly factor FliW">
    <location>
        <begin position="1"/>
        <end position="129"/>
    </location>
</feature>
<name>FLIW_CAMJJ</name>
<sequence>MTLAVKCPILGFEETKNMEFSTIDEVFVRLKSLDGKDFSFVLINPYLIRPDYEFDIPTYYQELLSLTPESNMKIFNIVAIAKSIEESTVNFLAPVVINLDNNTMVQVILDTVNYPDFFQADQIANYIKK</sequence>